<name>THER_BACTH</name>
<evidence type="ECO:0000250" key="1"/>
<evidence type="ECO:0000255" key="2">
    <source>
        <dbReference type="PROSITE-ProRule" id="PRU10095"/>
    </source>
</evidence>
<evidence type="ECO:0000269" key="3">
    <source>
    </source>
</evidence>
<evidence type="ECO:0000269" key="4">
    <source>
    </source>
</evidence>
<evidence type="ECO:0000269" key="5">
    <source ref="2"/>
</evidence>
<evidence type="ECO:0000305" key="6"/>
<evidence type="ECO:0007829" key="7">
    <source>
        <dbReference type="PDB" id="5JVI"/>
    </source>
</evidence>
<evidence type="ECO:0007829" key="8">
    <source>
        <dbReference type="PDB" id="6SBK"/>
    </source>
</evidence>
<evidence type="ECO:0007829" key="9">
    <source>
        <dbReference type="PDB" id="6ZHJ"/>
    </source>
</evidence>
<protein>
    <recommendedName>
        <fullName>Thermolysin</fullName>
        <ecNumber>3.4.24.27</ecNumber>
    </recommendedName>
    <alternativeName>
        <fullName>Thermostable neutral proteinase</fullName>
    </alternativeName>
</protein>
<proteinExistence type="evidence at protein level"/>
<accession>P00800</accession>
<accession>Q45779</accession>
<keyword id="KW-0002">3D-structure</keyword>
<keyword id="KW-0106">Calcium</keyword>
<keyword id="KW-0903">Direct protein sequencing</keyword>
<keyword id="KW-0378">Hydrolase</keyword>
<keyword id="KW-0479">Metal-binding</keyword>
<keyword id="KW-0482">Metalloprotease</keyword>
<keyword id="KW-0645">Protease</keyword>
<keyword id="KW-0964">Secreted</keyword>
<keyword id="KW-0732">Signal</keyword>
<keyword id="KW-0862">Zinc</keyword>
<keyword id="KW-0865">Zymogen</keyword>
<sequence>MKMKMKLASFGLAAGLAAQVFLPYNALASTEHVTWNQQFQTPQFISGDLLKVNGTSPEELVYQYVEKNENKFKFHENAKDTLQLKEKKNDNLGFTFMRFQQTYKGIPVFGAVVTSHVKDGTLTALSGTLIPNLDTKGSLKSGKKLSEKQARDIAEKDLVANVTKEVPEYEQGKDTEFVVYVNGDEASLAYVVNLNFLTPEPGNWLYIIDAVDGKILNKFNQLDAAKPGDVKSITGTSTVGVGRGVLGDQKNINTTYSTYYYLQDNTRGNGIFTYDAKYRTTLPGSLWADADNQFFASYDAPAVDAHYYAGVTYDYYKNVHNRLSYDGNNAAIRSSVHYSQGYNNAFWNGSQMVYGDGDGQTFIPLSGGIDVVAHELTHAVTDYTAGLIYQNESGAINEAISDIFGTLVEFYANKNPDWEIGEDVYTPGISGDSLRSMSDPAKYGDPDHYSKRYTGTQDNGGVHINSGIINKAAYLISQGGTHYGVSVVGIGRDKLGKIFYRALTQYLTPTSNFSQLRAAAVQSATDLYGSTSQEVASVKQAFDAVGVK</sequence>
<feature type="signal peptide" evidence="1">
    <location>
        <begin position="1"/>
        <end position="28"/>
    </location>
</feature>
<feature type="propeptide" id="PRO_0000028592" description="Activation peptide" evidence="4 5">
    <location>
        <begin position="29"/>
        <end position="232"/>
    </location>
</feature>
<feature type="chain" id="PRO_0000028593" description="Thermolysin">
    <location>
        <begin position="233"/>
        <end position="548"/>
    </location>
</feature>
<feature type="active site" evidence="2 3">
    <location>
        <position position="375"/>
    </location>
</feature>
<feature type="active site" description="Proton donor" evidence="2 3">
    <location>
        <position position="463"/>
    </location>
</feature>
<feature type="binding site">
    <location>
        <position position="289"/>
    </location>
    <ligand>
        <name>Ca(2+)</name>
        <dbReference type="ChEBI" id="CHEBI:29108"/>
        <label>1</label>
    </ligand>
</feature>
<feature type="binding site">
    <location>
        <position position="291"/>
    </location>
    <ligand>
        <name>Ca(2+)</name>
        <dbReference type="ChEBI" id="CHEBI:29108"/>
        <label>1</label>
    </ligand>
</feature>
<feature type="binding site">
    <location>
        <position position="293"/>
    </location>
    <ligand>
        <name>Ca(2+)</name>
        <dbReference type="ChEBI" id="CHEBI:29108"/>
        <label>1</label>
    </ligand>
</feature>
<feature type="binding site">
    <location>
        <position position="370"/>
    </location>
    <ligand>
        <name>Ca(2+)</name>
        <dbReference type="ChEBI" id="CHEBI:29108"/>
        <label>2</label>
    </ligand>
</feature>
<feature type="binding site">
    <location>
        <position position="374"/>
    </location>
    <ligand>
        <name>Zn(2+)</name>
        <dbReference type="ChEBI" id="CHEBI:29105"/>
        <note>catalytic</note>
    </ligand>
</feature>
<feature type="binding site">
    <location>
        <position position="378"/>
    </location>
    <ligand>
        <name>Zn(2+)</name>
        <dbReference type="ChEBI" id="CHEBI:29105"/>
        <note>catalytic</note>
    </ligand>
</feature>
<feature type="binding site">
    <location>
        <position position="398"/>
    </location>
    <ligand>
        <name>Zn(2+)</name>
        <dbReference type="ChEBI" id="CHEBI:29105"/>
        <note>catalytic</note>
    </ligand>
</feature>
<feature type="binding site">
    <location>
        <position position="409"/>
    </location>
    <ligand>
        <name>Ca(2+)</name>
        <dbReference type="ChEBI" id="CHEBI:29108"/>
        <label>2</label>
    </ligand>
</feature>
<feature type="binding site">
    <location>
        <position position="409"/>
    </location>
    <ligand>
        <name>Ca(2+)</name>
        <dbReference type="ChEBI" id="CHEBI:29108"/>
        <label>3</label>
    </ligand>
</feature>
<feature type="binding site">
    <location>
        <position position="415"/>
    </location>
    <ligand>
        <name>Ca(2+)</name>
        <dbReference type="ChEBI" id="CHEBI:29108"/>
        <label>3</label>
    </ligand>
</feature>
<feature type="binding site">
    <location>
        <position position="417"/>
    </location>
    <ligand>
        <name>Ca(2+)</name>
        <dbReference type="ChEBI" id="CHEBI:29108"/>
        <label>2</label>
    </ligand>
</feature>
<feature type="binding site">
    <location>
        <position position="417"/>
    </location>
    <ligand>
        <name>Ca(2+)</name>
        <dbReference type="ChEBI" id="CHEBI:29108"/>
        <label>3</label>
    </ligand>
</feature>
<feature type="binding site">
    <location>
        <position position="419"/>
    </location>
    <ligand>
        <name>Ca(2+)</name>
        <dbReference type="ChEBI" id="CHEBI:29108"/>
        <label>2</label>
    </ligand>
</feature>
<feature type="binding site">
    <location>
        <position position="422"/>
    </location>
    <ligand>
        <name>Ca(2+)</name>
        <dbReference type="ChEBI" id="CHEBI:29108"/>
        <label>2</label>
    </ligand>
</feature>
<feature type="binding site">
    <location>
        <position position="422"/>
    </location>
    <ligand>
        <name>Ca(2+)</name>
        <dbReference type="ChEBI" id="CHEBI:29108"/>
        <label>3</label>
    </ligand>
</feature>
<feature type="binding site">
    <location>
        <position position="425"/>
    </location>
    <ligand>
        <name>Ca(2+)</name>
        <dbReference type="ChEBI" id="CHEBI:29108"/>
        <label>4</label>
    </ligand>
</feature>
<feature type="binding site">
    <location>
        <position position="426"/>
    </location>
    <ligand>
        <name>Ca(2+)</name>
        <dbReference type="ChEBI" id="CHEBI:29108"/>
        <label>4</label>
    </ligand>
</feature>
<feature type="binding site">
    <location>
        <position position="429"/>
    </location>
    <ligand>
        <name>Ca(2+)</name>
        <dbReference type="ChEBI" id="CHEBI:29108"/>
        <label>4</label>
    </ligand>
</feature>
<feature type="binding site">
    <location>
        <position position="432"/>
    </location>
    <ligand>
        <name>Ca(2+)</name>
        <dbReference type="ChEBI" id="CHEBI:29108"/>
        <label>4</label>
    </ligand>
</feature>
<feature type="sequence conflict" description="In Ref. 2; AA sequence." evidence="6" ref="2">
    <original>N</original>
    <variation>D</variation>
    <location>
        <position position="269"/>
    </location>
</feature>
<feature type="sequence conflict" description="In Ref. 2; AA sequence." evidence="6" ref="2">
    <original>Q</original>
    <variation>E</variation>
    <location>
        <position position="351"/>
    </location>
</feature>
<feature type="sequence conflict" description="In Ref. 1; CAA54291." evidence="6" ref="1">
    <original>I</original>
    <variation>M</variation>
    <location>
        <position position="400"/>
    </location>
</feature>
<feature type="sequence conflict" description="In Ref. 1; CAA54291." evidence="6" ref="1">
    <original>E</original>
    <variation>K</variation>
    <location>
        <position position="409"/>
    </location>
</feature>
<feature type="strand" evidence="7">
    <location>
        <begin position="236"/>
        <end position="243"/>
    </location>
</feature>
<feature type="strand" evidence="7">
    <location>
        <begin position="249"/>
        <end position="264"/>
    </location>
</feature>
<feature type="strand" evidence="9">
    <location>
        <begin position="267"/>
        <end position="269"/>
    </location>
</feature>
<feature type="strand" evidence="7">
    <location>
        <begin position="271"/>
        <end position="275"/>
    </location>
</feature>
<feature type="strand" evidence="7">
    <location>
        <begin position="279"/>
        <end position="283"/>
    </location>
</feature>
<feature type="strand" evidence="7">
    <location>
        <begin position="288"/>
        <end position="294"/>
    </location>
</feature>
<feature type="helix" evidence="7">
    <location>
        <begin position="297"/>
        <end position="299"/>
    </location>
</feature>
<feature type="helix" evidence="7">
    <location>
        <begin position="300"/>
        <end position="320"/>
    </location>
</feature>
<feature type="turn" evidence="7">
    <location>
        <begin position="324"/>
        <end position="326"/>
    </location>
</feature>
<feature type="strand" evidence="7">
    <location>
        <begin position="332"/>
        <end position="341"/>
    </location>
</feature>
<feature type="strand" evidence="7">
    <location>
        <begin position="345"/>
        <end position="347"/>
    </location>
</feature>
<feature type="strand" evidence="7">
    <location>
        <begin position="349"/>
        <end position="355"/>
    </location>
</feature>
<feature type="strand" evidence="7">
    <location>
        <begin position="359"/>
        <end position="363"/>
    </location>
</feature>
<feature type="helix" evidence="7">
    <location>
        <begin position="365"/>
        <end position="367"/>
    </location>
</feature>
<feature type="helix" evidence="7">
    <location>
        <begin position="369"/>
        <end position="383"/>
    </location>
</feature>
<feature type="helix" evidence="7">
    <location>
        <begin position="391"/>
        <end position="412"/>
    </location>
</feature>
<feature type="strand" evidence="7">
    <location>
        <begin position="418"/>
        <end position="421"/>
    </location>
</feature>
<feature type="turn" evidence="7">
    <location>
        <begin position="422"/>
        <end position="424"/>
    </location>
</feature>
<feature type="strand" evidence="8">
    <location>
        <begin position="429"/>
        <end position="431"/>
    </location>
</feature>
<feature type="strand" evidence="7">
    <location>
        <begin position="434"/>
        <end position="438"/>
    </location>
</feature>
<feature type="helix" evidence="7">
    <location>
        <begin position="440"/>
        <end position="443"/>
    </location>
</feature>
<feature type="helix" evidence="7">
    <location>
        <begin position="449"/>
        <end position="451"/>
    </location>
</feature>
<feature type="helix" evidence="7">
    <location>
        <begin position="457"/>
        <end position="461"/>
    </location>
</feature>
<feature type="turn" evidence="7">
    <location>
        <begin position="462"/>
        <end position="465"/>
    </location>
</feature>
<feature type="helix" evidence="7">
    <location>
        <begin position="466"/>
        <end position="478"/>
    </location>
</feature>
<feature type="strand" evidence="7">
    <location>
        <begin position="480"/>
        <end position="482"/>
    </location>
</feature>
<feature type="strand" evidence="7">
    <location>
        <begin position="485"/>
        <end position="487"/>
    </location>
</feature>
<feature type="helix" evidence="7">
    <location>
        <begin position="492"/>
        <end position="505"/>
    </location>
</feature>
<feature type="helix" evidence="7">
    <location>
        <begin position="513"/>
        <end position="528"/>
    </location>
</feature>
<feature type="helix" evidence="7">
    <location>
        <begin position="533"/>
        <end position="544"/>
    </location>
</feature>
<dbReference type="EC" id="3.4.24.27"/>
<dbReference type="EMBL" id="X76986">
    <property type="protein sequence ID" value="CAA54291.1"/>
    <property type="molecule type" value="Genomic_DNA"/>
</dbReference>
<dbReference type="PIR" id="I40579">
    <property type="entry name" value="HYBST"/>
</dbReference>
<dbReference type="PDB" id="1FJ3">
    <property type="method" value="X-ray"/>
    <property type="resolution" value="2.00 A"/>
    <property type="chains" value="A=233-548"/>
</dbReference>
<dbReference type="PDB" id="1FJO">
    <property type="method" value="X-ray"/>
    <property type="resolution" value="2.00 A"/>
    <property type="chains" value="A=233-548"/>
</dbReference>
<dbReference type="PDB" id="1FJQ">
    <property type="method" value="X-ray"/>
    <property type="resolution" value="1.70 A"/>
    <property type="chains" value="A=233-548"/>
</dbReference>
<dbReference type="PDB" id="1FJT">
    <property type="method" value="X-ray"/>
    <property type="resolution" value="2.20 A"/>
    <property type="chains" value="A=233-548"/>
</dbReference>
<dbReference type="PDB" id="1FJU">
    <property type="method" value="X-ray"/>
    <property type="resolution" value="2.00 A"/>
    <property type="chains" value="A=233-548"/>
</dbReference>
<dbReference type="PDB" id="1FJV">
    <property type="method" value="X-ray"/>
    <property type="resolution" value="2.00 A"/>
    <property type="chains" value="A=233-548"/>
</dbReference>
<dbReference type="PDB" id="1FJW">
    <property type="method" value="X-ray"/>
    <property type="resolution" value="1.90 A"/>
    <property type="chains" value="A=233-548"/>
</dbReference>
<dbReference type="PDB" id="1GXW">
    <property type="method" value="X-ray"/>
    <property type="resolution" value="2.18 A"/>
    <property type="chains" value="A=233-548"/>
</dbReference>
<dbReference type="PDB" id="1HYT">
    <property type="method" value="X-ray"/>
    <property type="resolution" value="1.70 A"/>
    <property type="chains" value="A=233-548"/>
</dbReference>
<dbReference type="PDB" id="1KEI">
    <property type="method" value="X-ray"/>
    <property type="resolution" value="1.60 A"/>
    <property type="chains" value="A=233-548"/>
</dbReference>
<dbReference type="PDB" id="1KJO">
    <property type="method" value="X-ray"/>
    <property type="resolution" value="1.60 A"/>
    <property type="chains" value="A=233-548"/>
</dbReference>
<dbReference type="PDB" id="1KJP">
    <property type="method" value="X-ray"/>
    <property type="resolution" value="1.60 A"/>
    <property type="chains" value="A=233-548"/>
</dbReference>
<dbReference type="PDB" id="1KKK">
    <property type="method" value="X-ray"/>
    <property type="resolution" value="1.60 A"/>
    <property type="chains" value="A=233-548"/>
</dbReference>
<dbReference type="PDB" id="1KL6">
    <property type="method" value="X-ray"/>
    <property type="resolution" value="1.80 A"/>
    <property type="chains" value="A=233-548"/>
</dbReference>
<dbReference type="PDB" id="1KR6">
    <property type="method" value="X-ray"/>
    <property type="resolution" value="1.80 A"/>
    <property type="chains" value="A=233-548"/>
</dbReference>
<dbReference type="PDB" id="1KRO">
    <property type="method" value="X-ray"/>
    <property type="resolution" value="1.70 A"/>
    <property type="chains" value="A=233-548"/>
</dbReference>
<dbReference type="PDB" id="1KS7">
    <property type="method" value="X-ray"/>
    <property type="resolution" value="1.70 A"/>
    <property type="chains" value="A=233-548"/>
</dbReference>
<dbReference type="PDB" id="1KTO">
    <property type="method" value="X-ray"/>
    <property type="resolution" value="1.90 A"/>
    <property type="chains" value="A=233-548"/>
</dbReference>
<dbReference type="PDB" id="1L3F">
    <property type="method" value="X-ray"/>
    <property type="resolution" value="2.30 A"/>
    <property type="chains" value="E=233-548"/>
</dbReference>
<dbReference type="PDB" id="1LNA">
    <property type="method" value="X-ray"/>
    <property type="resolution" value="1.90 A"/>
    <property type="chains" value="E=233-548"/>
</dbReference>
<dbReference type="PDB" id="1LNB">
    <property type="method" value="X-ray"/>
    <property type="resolution" value="1.80 A"/>
    <property type="chains" value="E=233-548"/>
</dbReference>
<dbReference type="PDB" id="1LNC">
    <property type="method" value="X-ray"/>
    <property type="resolution" value="1.80 A"/>
    <property type="chains" value="E=233-548"/>
</dbReference>
<dbReference type="PDB" id="1LND">
    <property type="method" value="X-ray"/>
    <property type="resolution" value="1.70 A"/>
    <property type="chains" value="E=233-548"/>
</dbReference>
<dbReference type="PDB" id="1LNE">
    <property type="method" value="X-ray"/>
    <property type="resolution" value="1.70 A"/>
    <property type="chains" value="E=233-548"/>
</dbReference>
<dbReference type="PDB" id="1LNF">
    <property type="method" value="X-ray"/>
    <property type="resolution" value="1.70 A"/>
    <property type="chains" value="E=233-548"/>
</dbReference>
<dbReference type="PDB" id="1OS0">
    <property type="method" value="X-ray"/>
    <property type="resolution" value="2.10 A"/>
    <property type="chains" value="A=233-548"/>
</dbReference>
<dbReference type="PDB" id="1PE5">
    <property type="method" value="X-ray"/>
    <property type="resolution" value="1.70 A"/>
    <property type="chains" value="A=233-548"/>
</dbReference>
<dbReference type="PDB" id="1PE7">
    <property type="method" value="X-ray"/>
    <property type="resolution" value="1.82 A"/>
    <property type="chains" value="A=233-548"/>
</dbReference>
<dbReference type="PDB" id="1PE8">
    <property type="method" value="X-ray"/>
    <property type="resolution" value="1.80 A"/>
    <property type="chains" value="A=233-548"/>
</dbReference>
<dbReference type="PDB" id="1QF0">
    <property type="method" value="X-ray"/>
    <property type="resolution" value="2.20 A"/>
    <property type="chains" value="A=233-548"/>
</dbReference>
<dbReference type="PDB" id="1QF1">
    <property type="method" value="X-ray"/>
    <property type="resolution" value="2.00 A"/>
    <property type="chains" value="A=233-548"/>
</dbReference>
<dbReference type="PDB" id="1QF2">
    <property type="method" value="X-ray"/>
    <property type="resolution" value="2.06 A"/>
    <property type="chains" value="A=233-548"/>
</dbReference>
<dbReference type="PDB" id="1THL">
    <property type="method" value="X-ray"/>
    <property type="resolution" value="1.70 A"/>
    <property type="chains" value="A=233-548"/>
</dbReference>
<dbReference type="PDB" id="1TLI">
    <property type="method" value="X-ray"/>
    <property type="resolution" value="2.05 A"/>
    <property type="chains" value="A=233-548"/>
</dbReference>
<dbReference type="PDB" id="1TLP">
    <property type="method" value="X-ray"/>
    <property type="resolution" value="2.30 A"/>
    <property type="chains" value="E=233-548"/>
</dbReference>
<dbReference type="PDB" id="1TLX">
    <property type="method" value="X-ray"/>
    <property type="resolution" value="2.10 A"/>
    <property type="chains" value="A=233-548"/>
</dbReference>
<dbReference type="PDB" id="1TMN">
    <property type="method" value="X-ray"/>
    <property type="resolution" value="1.90 A"/>
    <property type="chains" value="E=233-548"/>
</dbReference>
<dbReference type="PDB" id="1TRL">
    <property type="method" value="NMR"/>
    <property type="chains" value="A/B=487-548"/>
</dbReference>
<dbReference type="PDB" id="1Y3G">
    <property type="method" value="X-ray"/>
    <property type="resolution" value="2.10 A"/>
    <property type="chains" value="E=233-548"/>
</dbReference>
<dbReference type="PDB" id="1Z9G">
    <property type="method" value="X-ray"/>
    <property type="resolution" value="1.70 A"/>
    <property type="chains" value="E=233-548"/>
</dbReference>
<dbReference type="PDB" id="1ZDP">
    <property type="method" value="X-ray"/>
    <property type="resolution" value="1.70 A"/>
    <property type="chains" value="E=233-548"/>
</dbReference>
<dbReference type="PDB" id="2A7G">
    <property type="method" value="X-ray"/>
    <property type="resolution" value="1.85 A"/>
    <property type="chains" value="E=233-548"/>
</dbReference>
<dbReference type="PDB" id="2G4Z">
    <property type="method" value="X-ray"/>
    <property type="resolution" value="1.98 A"/>
    <property type="chains" value="A=233-548"/>
</dbReference>
<dbReference type="PDB" id="2TLI">
    <property type="method" value="X-ray"/>
    <property type="resolution" value="1.95 A"/>
    <property type="chains" value="A=233-548"/>
</dbReference>
<dbReference type="PDB" id="2TLX">
    <property type="method" value="X-ray"/>
    <property type="resolution" value="1.65 A"/>
    <property type="chains" value="A=233-548"/>
</dbReference>
<dbReference type="PDB" id="2TMN">
    <property type="method" value="X-ray"/>
    <property type="resolution" value="1.60 A"/>
    <property type="chains" value="E=233-548"/>
</dbReference>
<dbReference type="PDB" id="2WHZ">
    <property type="method" value="X-ray"/>
    <property type="resolution" value="1.75 A"/>
    <property type="chains" value="A=233-548"/>
</dbReference>
<dbReference type="PDB" id="2WI0">
    <property type="method" value="X-ray"/>
    <property type="resolution" value="1.95 A"/>
    <property type="chains" value="A=233-548"/>
</dbReference>
<dbReference type="PDB" id="3DNZ">
    <property type="method" value="X-ray"/>
    <property type="resolution" value="1.20 A"/>
    <property type="chains" value="A=233-548"/>
</dbReference>
<dbReference type="PDB" id="3DO0">
    <property type="method" value="X-ray"/>
    <property type="resolution" value="1.36 A"/>
    <property type="chains" value="A=233-548"/>
</dbReference>
<dbReference type="PDB" id="3DO1">
    <property type="method" value="X-ray"/>
    <property type="resolution" value="1.33 A"/>
    <property type="chains" value="A=233-548"/>
</dbReference>
<dbReference type="PDB" id="3DO2">
    <property type="method" value="X-ray"/>
    <property type="resolution" value="1.22 A"/>
    <property type="chains" value="A=233-548"/>
</dbReference>
<dbReference type="PDB" id="3EIM">
    <property type="method" value="X-ray"/>
    <property type="resolution" value="1.88 A"/>
    <property type="chains" value="A=233-548"/>
</dbReference>
<dbReference type="PDB" id="3F28">
    <property type="method" value="X-ray"/>
    <property type="resolution" value="1.68 A"/>
    <property type="chains" value="A=233-548"/>
</dbReference>
<dbReference type="PDB" id="3F2P">
    <property type="method" value="X-ray"/>
    <property type="resolution" value="1.95 A"/>
    <property type="chains" value="A=233-548"/>
</dbReference>
<dbReference type="PDB" id="3FB0">
    <property type="method" value="X-ray"/>
    <property type="resolution" value="1.60 A"/>
    <property type="chains" value="A=233-548"/>
</dbReference>
<dbReference type="PDB" id="3FBO">
    <property type="method" value="X-ray"/>
    <property type="resolution" value="1.92 A"/>
    <property type="chains" value="A=233-548"/>
</dbReference>
<dbReference type="PDB" id="3FCQ">
    <property type="method" value="X-ray"/>
    <property type="resolution" value="1.75 A"/>
    <property type="chains" value="A=233-548"/>
</dbReference>
<dbReference type="PDB" id="3FGD">
    <property type="method" value="X-ray"/>
    <property type="resolution" value="1.33 A"/>
    <property type="chains" value="A=233-548"/>
</dbReference>
<dbReference type="PDB" id="3FLF">
    <property type="method" value="X-ray"/>
    <property type="resolution" value="1.97 A"/>
    <property type="chains" value="A=233-548"/>
</dbReference>
<dbReference type="PDB" id="3FOR">
    <property type="method" value="X-ray"/>
    <property type="resolution" value="1.93 A"/>
    <property type="chains" value="A=233-548"/>
</dbReference>
<dbReference type="PDB" id="3FV4">
    <property type="method" value="X-ray"/>
    <property type="resolution" value="1.56 A"/>
    <property type="chains" value="A=233-548"/>
</dbReference>
<dbReference type="PDB" id="3FVP">
    <property type="method" value="X-ray"/>
    <property type="resolution" value="1.41 A"/>
    <property type="chains" value="A=233-548"/>
</dbReference>
<dbReference type="PDB" id="3FXP">
    <property type="method" value="X-ray"/>
    <property type="resolution" value="2.05 A"/>
    <property type="chains" value="A=233-548"/>
</dbReference>
<dbReference type="PDB" id="3FXS">
    <property type="method" value="X-ray"/>
    <property type="resolution" value="1.55 A"/>
    <property type="chains" value="A=233-548"/>
</dbReference>
<dbReference type="PDB" id="3LS7">
    <property type="method" value="X-ray"/>
    <property type="resolution" value="1.98 A"/>
    <property type="chains" value="A=233-548"/>
</dbReference>
<dbReference type="PDB" id="3MS3">
    <property type="method" value="X-ray"/>
    <property type="resolution" value="1.54 A"/>
    <property type="chains" value="A=233-548"/>
</dbReference>
<dbReference type="PDB" id="3MSA">
    <property type="method" value="X-ray"/>
    <property type="resolution" value="1.66 A"/>
    <property type="chains" value="A=233-548"/>
</dbReference>
<dbReference type="PDB" id="3MSF">
    <property type="method" value="X-ray"/>
    <property type="resolution" value="2.09 A"/>
    <property type="chains" value="A=233-548"/>
</dbReference>
<dbReference type="PDB" id="3MSN">
    <property type="method" value="X-ray"/>
    <property type="resolution" value="1.97 A"/>
    <property type="chains" value="A=233-548"/>
</dbReference>
<dbReference type="PDB" id="3N21">
    <property type="method" value="X-ray"/>
    <property type="resolution" value="1.87 A"/>
    <property type="chains" value="A=233-548"/>
</dbReference>
<dbReference type="PDB" id="3NN7">
    <property type="method" value="X-ray"/>
    <property type="resolution" value="2.05 A"/>
    <property type="chains" value="A=233-548"/>
</dbReference>
<dbReference type="PDB" id="3P7P">
    <property type="method" value="X-ray"/>
    <property type="resolution" value="2.20 A"/>
    <property type="chains" value="E=233-548"/>
</dbReference>
<dbReference type="PDB" id="3P7Q">
    <property type="method" value="X-ray"/>
    <property type="resolution" value="2.20 A"/>
    <property type="chains" value="E=233-548"/>
</dbReference>
<dbReference type="PDB" id="3P7R">
    <property type="method" value="X-ray"/>
    <property type="resolution" value="2.20 A"/>
    <property type="chains" value="E=233-548"/>
</dbReference>
<dbReference type="PDB" id="3P7S">
    <property type="method" value="X-ray"/>
    <property type="resolution" value="2.20 A"/>
    <property type="chains" value="E=233-548"/>
</dbReference>
<dbReference type="PDB" id="3P7T">
    <property type="method" value="X-ray"/>
    <property type="resolution" value="2.20 A"/>
    <property type="chains" value="E=233-548"/>
</dbReference>
<dbReference type="PDB" id="3P7U">
    <property type="method" value="X-ray"/>
    <property type="resolution" value="2.20 A"/>
    <property type="chains" value="E=233-548"/>
</dbReference>
<dbReference type="PDB" id="3P7V">
    <property type="method" value="X-ray"/>
    <property type="resolution" value="2.20 A"/>
    <property type="chains" value="E=233-548"/>
</dbReference>
<dbReference type="PDB" id="3P7W">
    <property type="method" value="X-ray"/>
    <property type="resolution" value="2.20 A"/>
    <property type="chains" value="E=233-548"/>
</dbReference>
<dbReference type="PDB" id="3QGO">
    <property type="method" value="X-ray"/>
    <property type="resolution" value="1.45 A"/>
    <property type="chains" value="A=233-548"/>
</dbReference>
<dbReference type="PDB" id="3QH1">
    <property type="method" value="X-ray"/>
    <property type="resolution" value="1.55 A"/>
    <property type="chains" value="A=233-548"/>
</dbReference>
<dbReference type="PDB" id="3QH5">
    <property type="method" value="X-ray"/>
    <property type="resolution" value="1.50 A"/>
    <property type="chains" value="A=233-548"/>
</dbReference>
<dbReference type="PDB" id="3SSB">
    <property type="method" value="X-ray"/>
    <property type="resolution" value="1.80 A"/>
    <property type="chains" value="A/B=233-548"/>
</dbReference>
<dbReference type="PDB" id="3T2H">
    <property type="method" value="X-ray"/>
    <property type="resolution" value="1.95 A"/>
    <property type="chains" value="E=233-548"/>
</dbReference>
<dbReference type="PDB" id="3T2I">
    <property type="method" value="X-ray"/>
    <property type="resolution" value="2.10 A"/>
    <property type="chains" value="E=233-548"/>
</dbReference>
<dbReference type="PDB" id="3T2J">
    <property type="method" value="X-ray"/>
    <property type="resolution" value="2.00 A"/>
    <property type="chains" value="E=233-548"/>
</dbReference>
<dbReference type="PDB" id="3T73">
    <property type="method" value="X-ray"/>
    <property type="resolution" value="1.60 A"/>
    <property type="chains" value="A=233-548"/>
</dbReference>
<dbReference type="PDB" id="3T74">
    <property type="method" value="X-ray"/>
    <property type="resolution" value="1.28 A"/>
    <property type="chains" value="A=233-548"/>
</dbReference>
<dbReference type="PDB" id="3T87">
    <property type="method" value="X-ray"/>
    <property type="resolution" value="1.28 A"/>
    <property type="chains" value="A=233-548"/>
</dbReference>
<dbReference type="PDB" id="3T8C">
    <property type="method" value="X-ray"/>
    <property type="resolution" value="1.66 A"/>
    <property type="chains" value="A=233-548"/>
</dbReference>
<dbReference type="PDB" id="3T8D">
    <property type="method" value="X-ray"/>
    <property type="resolution" value="1.41 A"/>
    <property type="chains" value="A=233-548"/>
</dbReference>
<dbReference type="PDB" id="3T8F">
    <property type="method" value="X-ray"/>
    <property type="resolution" value="1.44 A"/>
    <property type="chains" value="A=233-548"/>
</dbReference>
<dbReference type="PDB" id="3T8G">
    <property type="method" value="X-ray"/>
    <property type="resolution" value="1.50 A"/>
    <property type="chains" value="A=233-548"/>
</dbReference>
<dbReference type="PDB" id="3T8H">
    <property type="method" value="X-ray"/>
    <property type="resolution" value="1.45 A"/>
    <property type="chains" value="A=233-548"/>
</dbReference>
<dbReference type="PDB" id="3TLI">
    <property type="method" value="X-ray"/>
    <property type="resolution" value="1.95 A"/>
    <property type="chains" value="A=233-548"/>
</dbReference>
<dbReference type="PDB" id="3TMN">
    <property type="method" value="X-ray"/>
    <property type="resolution" value="1.70 A"/>
    <property type="chains" value="E=233-548"/>
</dbReference>
<dbReference type="PDB" id="3ZI6">
    <property type="method" value="X-ray"/>
    <property type="resolution" value="2.00 A"/>
    <property type="chains" value="A=233-548"/>
</dbReference>
<dbReference type="PDB" id="4D91">
    <property type="method" value="X-ray"/>
    <property type="resolution" value="1.90 A"/>
    <property type="chains" value="A=233-548"/>
</dbReference>
<dbReference type="PDB" id="4D9W">
    <property type="method" value="X-ray"/>
    <property type="resolution" value="1.38 A"/>
    <property type="chains" value="A=233-548"/>
</dbReference>
<dbReference type="PDB" id="4H57">
    <property type="method" value="X-ray"/>
    <property type="resolution" value="1.56 A"/>
    <property type="chains" value="A=233-548"/>
</dbReference>
<dbReference type="PDB" id="4MTW">
    <property type="method" value="X-ray"/>
    <property type="resolution" value="1.32 A"/>
    <property type="chains" value="E=233-548"/>
</dbReference>
<dbReference type="PDB" id="4MWP">
    <property type="method" value="X-ray"/>
    <property type="resolution" value="1.23 A"/>
    <property type="chains" value="E=233-548"/>
</dbReference>
<dbReference type="PDB" id="4MXJ">
    <property type="method" value="X-ray"/>
    <property type="resolution" value="1.35 A"/>
    <property type="chains" value="E=233-548"/>
</dbReference>
<dbReference type="PDB" id="4MZN">
    <property type="method" value="X-ray"/>
    <property type="resolution" value="1.17 A"/>
    <property type="chains" value="E=233-548"/>
</dbReference>
<dbReference type="PDB" id="4N4E">
    <property type="method" value="X-ray"/>
    <property type="resolution" value="1.13 A"/>
    <property type="chains" value="E=233-548"/>
</dbReference>
<dbReference type="PDB" id="4N5P">
    <property type="method" value="X-ray"/>
    <property type="resolution" value="1.25 A"/>
    <property type="chains" value="E=233-548"/>
</dbReference>
<dbReference type="PDB" id="4N66">
    <property type="method" value="X-ray"/>
    <property type="resolution" value="1.44 A"/>
    <property type="chains" value="E=233-548"/>
</dbReference>
<dbReference type="PDB" id="4OI5">
    <property type="method" value="X-ray"/>
    <property type="resolution" value="1.30 A"/>
    <property type="chains" value="E=233-548"/>
</dbReference>
<dbReference type="PDB" id="4OW3">
    <property type="method" value="X-ray"/>
    <property type="resolution" value="2.10 A"/>
    <property type="chains" value="A=233-548"/>
</dbReference>
<dbReference type="PDB" id="4TLI">
    <property type="method" value="X-ray"/>
    <property type="resolution" value="1.95 A"/>
    <property type="chains" value="A=233-548"/>
</dbReference>
<dbReference type="PDB" id="4TLN">
    <property type="method" value="X-ray"/>
    <property type="resolution" value="2.30 A"/>
    <property type="chains" value="A=233-548"/>
</dbReference>
<dbReference type="PDB" id="4TMN">
    <property type="method" value="X-ray"/>
    <property type="resolution" value="1.70 A"/>
    <property type="chains" value="E=233-548"/>
</dbReference>
<dbReference type="PDB" id="4TNL">
    <property type="method" value="X-ray"/>
    <property type="resolution" value="1.80 A"/>
    <property type="chains" value="A=233-548"/>
</dbReference>
<dbReference type="PDB" id="5A3Y">
    <property type="method" value="X-ray"/>
    <property type="resolution" value="1.27 A"/>
    <property type="chains" value="A=1-548"/>
</dbReference>
<dbReference type="PDB" id="5DPE">
    <property type="method" value="X-ray"/>
    <property type="resolution" value="1.34 A"/>
    <property type="chains" value="E=233-548"/>
</dbReference>
<dbReference type="PDB" id="5DPF">
    <property type="method" value="X-ray"/>
    <property type="resolution" value="1.47 A"/>
    <property type="chains" value="E=233-548"/>
</dbReference>
<dbReference type="PDB" id="5FSJ">
    <property type="method" value="X-ray"/>
    <property type="resolution" value="1.20 A"/>
    <property type="chains" value="A=233-548"/>
</dbReference>
<dbReference type="PDB" id="5FSP">
    <property type="method" value="X-ray"/>
    <property type="resolution" value="1.70 A"/>
    <property type="chains" value="A=233-548"/>
</dbReference>
<dbReference type="PDB" id="5FSS">
    <property type="method" value="X-ray"/>
    <property type="resolution" value="1.50 A"/>
    <property type="chains" value="A=233-548"/>
</dbReference>
<dbReference type="PDB" id="5FXN">
    <property type="method" value="X-ray"/>
    <property type="resolution" value="1.45 A"/>
    <property type="chains" value="A=234-548"/>
</dbReference>
<dbReference type="PDB" id="5JS3">
    <property type="method" value="X-ray"/>
    <property type="resolution" value="1.16 A"/>
    <property type="chains" value="E=233-548"/>
</dbReference>
<dbReference type="PDB" id="5JSS">
    <property type="method" value="X-ray"/>
    <property type="resolution" value="1.19 A"/>
    <property type="chains" value="E=233-548"/>
</dbReference>
<dbReference type="PDB" id="5JT9">
    <property type="method" value="X-ray"/>
    <property type="resolution" value="1.26 A"/>
    <property type="chains" value="E=233-548"/>
</dbReference>
<dbReference type="PDB" id="5JVI">
    <property type="method" value="X-ray"/>
    <property type="resolution" value="1.12 A"/>
    <property type="chains" value="E=233-548"/>
</dbReference>
<dbReference type="PDB" id="5JXN">
    <property type="method" value="X-ray"/>
    <property type="resolution" value="1.38 A"/>
    <property type="chains" value="E=233-548"/>
</dbReference>
<dbReference type="PDB" id="5K7T">
    <property type="method" value="EM"/>
    <property type="resolution" value="2.50 A"/>
    <property type="chains" value="A=233-548"/>
</dbReference>
<dbReference type="PDB" id="5L3U">
    <property type="method" value="X-ray"/>
    <property type="resolution" value="1.23 A"/>
    <property type="chains" value="E=233-548"/>
</dbReference>
<dbReference type="PDB" id="5L41">
    <property type="method" value="X-ray"/>
    <property type="resolution" value="1.25 A"/>
    <property type="chains" value="E=233-548"/>
</dbReference>
<dbReference type="PDB" id="5L8P">
    <property type="method" value="X-ray"/>
    <property type="resolution" value="1.29 A"/>
    <property type="chains" value="E=233-548"/>
</dbReference>
<dbReference type="PDB" id="5LIF">
    <property type="method" value="X-ray"/>
    <property type="resolution" value="1.31 A"/>
    <property type="chains" value="E=233-548"/>
</dbReference>
<dbReference type="PDB" id="5LVD">
    <property type="method" value="X-ray"/>
    <property type="resolution" value="1.25 A"/>
    <property type="chains" value="E=233-548"/>
</dbReference>
<dbReference type="PDB" id="5LWD">
    <property type="method" value="X-ray"/>
    <property type="resolution" value="1.23 A"/>
    <property type="chains" value="E=233-548"/>
</dbReference>
<dbReference type="PDB" id="5M5F">
    <property type="method" value="X-ray"/>
    <property type="resolution" value="1.33 A"/>
    <property type="chains" value="E=233-548"/>
</dbReference>
<dbReference type="PDB" id="5M69">
    <property type="method" value="X-ray"/>
    <property type="resolution" value="1.44 A"/>
    <property type="chains" value="E=233-548"/>
</dbReference>
<dbReference type="PDB" id="5M9W">
    <property type="method" value="X-ray"/>
    <property type="resolution" value="1.21 A"/>
    <property type="chains" value="A=233-548"/>
</dbReference>
<dbReference type="PDB" id="5MA7">
    <property type="method" value="X-ray"/>
    <property type="resolution" value="1.30 A"/>
    <property type="chains" value="E=233-548"/>
</dbReference>
<dbReference type="PDB" id="5MNR">
    <property type="method" value="X-ray"/>
    <property type="resolution" value="1.25 A"/>
    <property type="chains" value="E=233-548"/>
</dbReference>
<dbReference type="PDB" id="5N2T">
    <property type="method" value="X-ray"/>
    <property type="resolution" value="1.38 A"/>
    <property type="chains" value="E=233-548"/>
</dbReference>
<dbReference type="PDB" id="5N2X">
    <property type="method" value="X-ray"/>
    <property type="resolution" value="1.21 A"/>
    <property type="chains" value="E=233-548"/>
</dbReference>
<dbReference type="PDB" id="5N2Z">
    <property type="method" value="X-ray"/>
    <property type="resolution" value="1.37 A"/>
    <property type="chains" value="E=233-548"/>
</dbReference>
<dbReference type="PDB" id="5N31">
    <property type="method" value="X-ray"/>
    <property type="resolution" value="1.37 A"/>
    <property type="chains" value="E=233-548"/>
</dbReference>
<dbReference type="PDB" id="5N34">
    <property type="method" value="X-ray"/>
    <property type="resolution" value="1.22 A"/>
    <property type="chains" value="E=233-548"/>
</dbReference>
<dbReference type="PDB" id="5N3V">
    <property type="method" value="X-ray"/>
    <property type="resolution" value="1.12 A"/>
    <property type="chains" value="E=233-548"/>
</dbReference>
<dbReference type="PDB" id="5N3Y">
    <property type="method" value="X-ray"/>
    <property type="resolution" value="1.34 A"/>
    <property type="chains" value="E=233-548"/>
</dbReference>
<dbReference type="PDB" id="5O8N">
    <property type="method" value="X-ray"/>
    <property type="resolution" value="1.90 A"/>
    <property type="chains" value="A=233-548"/>
</dbReference>
<dbReference type="PDB" id="5ONR">
    <property type="method" value="X-ray"/>
    <property type="resolution" value="1.39 A"/>
    <property type="chains" value="A=233-548"/>
</dbReference>
<dbReference type="PDB" id="5T9I">
    <property type="method" value="X-ray"/>
    <property type="resolution" value="2.09 A"/>
    <property type="chains" value="A=233-548"/>
</dbReference>
<dbReference type="PDB" id="5T9K">
    <property type="method" value="X-ray"/>
    <property type="resolution" value="2.10 A"/>
    <property type="chains" value="A=233-548"/>
</dbReference>
<dbReference type="PDB" id="5T9Q">
    <property type="method" value="X-ray"/>
    <property type="resolution" value="2.10 A"/>
    <property type="chains" value="A=233-548"/>
</dbReference>
<dbReference type="PDB" id="5TAC">
    <property type="method" value="X-ray"/>
    <property type="resolution" value="2.04 A"/>
    <property type="chains" value="A=233-548"/>
</dbReference>
<dbReference type="PDB" id="5TAD">
    <property type="method" value="X-ray"/>
    <property type="resolution" value="2.09 A"/>
    <property type="chains" value="A=233-548"/>
</dbReference>
<dbReference type="PDB" id="5TAE">
    <property type="method" value="X-ray"/>
    <property type="resolution" value="2.30 A"/>
    <property type="chains" value="A=233-548"/>
</dbReference>
<dbReference type="PDB" id="5TAI">
    <property type="method" value="X-ray"/>
    <property type="resolution" value="2.30 A"/>
    <property type="chains" value="A=233-548"/>
</dbReference>
<dbReference type="PDB" id="5TAJ">
    <property type="method" value="X-ray"/>
    <property type="resolution" value="2.03 A"/>
    <property type="chains" value="A=233-548"/>
</dbReference>
<dbReference type="PDB" id="5TAK">
    <property type="method" value="X-ray"/>
    <property type="resolution" value="2.00 A"/>
    <property type="chains" value="A=233-548"/>
</dbReference>
<dbReference type="PDB" id="5TLI">
    <property type="method" value="X-ray"/>
    <property type="resolution" value="2.10 A"/>
    <property type="chains" value="A=233-548"/>
</dbReference>
<dbReference type="PDB" id="5TLN">
    <property type="method" value="X-ray"/>
    <property type="resolution" value="2.30 A"/>
    <property type="chains" value="A=233-548"/>
</dbReference>
<dbReference type="PDB" id="5TMN">
    <property type="method" value="X-ray"/>
    <property type="resolution" value="1.60 A"/>
    <property type="chains" value="E=233-548"/>
</dbReference>
<dbReference type="PDB" id="5UN3">
    <property type="method" value="X-ray"/>
    <property type="resolution" value="1.60 A"/>
    <property type="chains" value="A=233-548"/>
</dbReference>
<dbReference type="PDB" id="5UU7">
    <property type="method" value="X-ray"/>
    <property type="resolution" value="1.60 A"/>
    <property type="chains" value="A=233-548"/>
</dbReference>
<dbReference type="PDB" id="5UU8">
    <property type="method" value="X-ray"/>
    <property type="resolution" value="2.50 A"/>
    <property type="chains" value="A=233-548"/>
</dbReference>
<dbReference type="PDB" id="5UU9">
    <property type="method" value="X-ray"/>
    <property type="resolution" value="1.60 A"/>
    <property type="chains" value="A=233-548"/>
</dbReference>
<dbReference type="PDB" id="5UUA">
    <property type="method" value="X-ray"/>
    <property type="resolution" value="1.60 A"/>
    <property type="chains" value="A=233-548"/>
</dbReference>
<dbReference type="PDB" id="5UUB">
    <property type="method" value="X-ray"/>
    <property type="resolution" value="1.60 A"/>
    <property type="chains" value="A=233-548"/>
</dbReference>
<dbReference type="PDB" id="5UUC">
    <property type="method" value="X-ray"/>
    <property type="resolution" value="1.60 A"/>
    <property type="chains" value="A=233-548"/>
</dbReference>
<dbReference type="PDB" id="5UUD">
    <property type="method" value="X-ray"/>
    <property type="resolution" value="1.60 A"/>
    <property type="chains" value="A=233-548"/>
</dbReference>
<dbReference type="PDB" id="5UUE">
    <property type="method" value="X-ray"/>
    <property type="resolution" value="1.60 A"/>
    <property type="chains" value="A=233-548"/>
</dbReference>
<dbReference type="PDB" id="6D5N">
    <property type="method" value="X-ray"/>
    <property type="resolution" value="2.00 A"/>
    <property type="chains" value="A=233-548"/>
</dbReference>
<dbReference type="PDB" id="6D5O">
    <property type="method" value="X-ray"/>
    <property type="resolution" value="2.00 A"/>
    <property type="chains" value="A=233-548"/>
</dbReference>
<dbReference type="PDB" id="6D5P">
    <property type="method" value="X-ray"/>
    <property type="resolution" value="3.00 A"/>
    <property type="chains" value="A=233-548"/>
</dbReference>
<dbReference type="PDB" id="6D5Q">
    <property type="method" value="X-ray"/>
    <property type="resolution" value="2.00 A"/>
    <property type="chains" value="A=233-548"/>
</dbReference>
<dbReference type="PDB" id="6D5R">
    <property type="method" value="X-ray"/>
    <property type="resolution" value="2.00 A"/>
    <property type="chains" value="A=233-548"/>
</dbReference>
<dbReference type="PDB" id="6D5S">
    <property type="method" value="X-ray"/>
    <property type="resolution" value="2.00 A"/>
    <property type="chains" value="A=233-548"/>
</dbReference>
<dbReference type="PDB" id="6D5T">
    <property type="method" value="X-ray"/>
    <property type="resolution" value="2.00 A"/>
    <property type="chains" value="A=233-548"/>
</dbReference>
<dbReference type="PDB" id="6D5U">
    <property type="method" value="X-ray"/>
    <property type="resolution" value="2.00 A"/>
    <property type="chains" value="A=233-548"/>
</dbReference>
<dbReference type="PDB" id="6FJ2">
    <property type="method" value="X-ray"/>
    <property type="resolution" value="1.43 A"/>
    <property type="chains" value="A=233-548"/>
</dbReference>
<dbReference type="PDB" id="6IG7">
    <property type="method" value="X-ray"/>
    <property type="resolution" value="1.80 A"/>
    <property type="chains" value="A=233-548"/>
</dbReference>
<dbReference type="PDB" id="6LZN">
    <property type="method" value="X-ray"/>
    <property type="resolution" value="1.50 A"/>
    <property type="chains" value="A=233-548"/>
</dbReference>
<dbReference type="PDB" id="6LZO">
    <property type="method" value="X-ray"/>
    <property type="resolution" value="1.80 A"/>
    <property type="chains" value="A=233-548"/>
</dbReference>
<dbReference type="PDB" id="6N4W">
    <property type="method" value="X-ray"/>
    <property type="resolution" value="1.40 A"/>
    <property type="chains" value="A=233-548"/>
</dbReference>
<dbReference type="PDB" id="6N4Z">
    <property type="method" value="X-ray"/>
    <property type="resolution" value="1.40 A"/>
    <property type="chains" value="A=233-548"/>
</dbReference>
<dbReference type="PDB" id="6QAR">
    <property type="method" value="X-ray"/>
    <property type="resolution" value="1.85 A"/>
    <property type="chains" value="A=233-548"/>
</dbReference>
<dbReference type="PDB" id="6QF2">
    <property type="method" value="X-ray"/>
    <property type="resolution" value="1.73 A"/>
    <property type="chains" value="A=233-548"/>
</dbReference>
<dbReference type="PDB" id="6QF3">
    <property type="method" value="X-ray"/>
    <property type="resolution" value="1.52 A"/>
    <property type="chains" value="A=233-548"/>
</dbReference>
<dbReference type="PDB" id="6SB9">
    <property type="method" value="X-ray"/>
    <property type="resolution" value="1.30 A"/>
    <property type="chains" value="E=233-548"/>
</dbReference>
<dbReference type="PDB" id="6SBK">
    <property type="method" value="X-ray"/>
    <property type="resolution" value="1.48 A"/>
    <property type="chains" value="E=233-548"/>
</dbReference>
<dbReference type="PDB" id="6SC0">
    <property type="method" value="X-ray"/>
    <property type="resolution" value="1.53 A"/>
    <property type="chains" value="E=233-548"/>
</dbReference>
<dbReference type="PDB" id="6SC1">
    <property type="method" value="X-ray"/>
    <property type="resolution" value="1.56 A"/>
    <property type="chains" value="E=233-548"/>
</dbReference>
<dbReference type="PDB" id="6SC3">
    <property type="method" value="X-ray"/>
    <property type="resolution" value="1.82 A"/>
    <property type="chains" value="E=233-548"/>
</dbReference>
<dbReference type="PDB" id="6SCK">
    <property type="method" value="X-ray"/>
    <property type="resolution" value="1.41 A"/>
    <property type="chains" value="E=233-548"/>
</dbReference>
<dbReference type="PDB" id="6SCU">
    <property type="method" value="X-ray"/>
    <property type="resolution" value="1.42 A"/>
    <property type="chains" value="E=233-548"/>
</dbReference>
<dbReference type="PDB" id="6SEL">
    <property type="method" value="X-ray"/>
    <property type="resolution" value="2.20 A"/>
    <property type="chains" value="A=233-548"/>
</dbReference>
<dbReference type="PDB" id="6TLI">
    <property type="method" value="X-ray"/>
    <property type="resolution" value="2.10 A"/>
    <property type="chains" value="A=233-548"/>
</dbReference>
<dbReference type="PDB" id="6TMN">
    <property type="method" value="X-ray"/>
    <property type="resolution" value="1.60 A"/>
    <property type="chains" value="E=233-548"/>
</dbReference>
<dbReference type="PDB" id="6ZHJ">
    <property type="method" value="EM"/>
    <property type="resolution" value="3.26 A"/>
    <property type="chains" value="A=233-548"/>
</dbReference>
<dbReference type="PDB" id="7AKN">
    <property type="method" value="X-ray"/>
    <property type="resolution" value="2.46 A"/>
    <property type="chains" value="A=233-548"/>
</dbReference>
<dbReference type="PDB" id="7TLI">
    <property type="method" value="X-ray"/>
    <property type="resolution" value="1.95 A"/>
    <property type="chains" value="A=233-548"/>
</dbReference>
<dbReference type="PDB" id="7TLN">
    <property type="method" value="X-ray"/>
    <property type="resolution" value="2.30 A"/>
    <property type="chains" value="A=233-548"/>
</dbReference>
<dbReference type="PDB" id="8TLI">
    <property type="method" value="X-ray"/>
    <property type="resolution" value="2.20 A"/>
    <property type="chains" value="A=233-548"/>
</dbReference>
<dbReference type="PDB" id="8TLN">
    <property type="method" value="X-ray"/>
    <property type="resolution" value="1.60 A"/>
    <property type="chains" value="E=233-548"/>
</dbReference>
<dbReference type="PDB" id="8ZM4">
    <property type="method" value="X-ray"/>
    <property type="resolution" value="1.40 A"/>
    <property type="chains" value="A=233-548"/>
</dbReference>
<dbReference type="PDB" id="8ZM5">
    <property type="method" value="X-ray"/>
    <property type="resolution" value="1.40 A"/>
    <property type="chains" value="A=233-548"/>
</dbReference>
<dbReference type="PDB" id="8ZM6">
    <property type="method" value="X-ray"/>
    <property type="resolution" value="1.40 A"/>
    <property type="chains" value="A=233-548"/>
</dbReference>
<dbReference type="PDB" id="9F56">
    <property type="method" value="X-ray"/>
    <property type="resolution" value="2.10 A"/>
    <property type="chains" value="A=233-548"/>
</dbReference>
<dbReference type="PDBsum" id="1FJ3"/>
<dbReference type="PDBsum" id="1FJO"/>
<dbReference type="PDBsum" id="1FJQ"/>
<dbReference type="PDBsum" id="1FJT"/>
<dbReference type="PDBsum" id="1FJU"/>
<dbReference type="PDBsum" id="1FJV"/>
<dbReference type="PDBsum" id="1FJW"/>
<dbReference type="PDBsum" id="1GXW"/>
<dbReference type="PDBsum" id="1HYT"/>
<dbReference type="PDBsum" id="1KEI"/>
<dbReference type="PDBsum" id="1KJO"/>
<dbReference type="PDBsum" id="1KJP"/>
<dbReference type="PDBsum" id="1KKK"/>
<dbReference type="PDBsum" id="1KL6"/>
<dbReference type="PDBsum" id="1KR6"/>
<dbReference type="PDBsum" id="1KRO"/>
<dbReference type="PDBsum" id="1KS7"/>
<dbReference type="PDBsum" id="1KTO"/>
<dbReference type="PDBsum" id="1L3F"/>
<dbReference type="PDBsum" id="1LNA"/>
<dbReference type="PDBsum" id="1LNB"/>
<dbReference type="PDBsum" id="1LNC"/>
<dbReference type="PDBsum" id="1LND"/>
<dbReference type="PDBsum" id="1LNE"/>
<dbReference type="PDBsum" id="1LNF"/>
<dbReference type="PDBsum" id="1OS0"/>
<dbReference type="PDBsum" id="1PE5"/>
<dbReference type="PDBsum" id="1PE7"/>
<dbReference type="PDBsum" id="1PE8"/>
<dbReference type="PDBsum" id="1QF0"/>
<dbReference type="PDBsum" id="1QF1"/>
<dbReference type="PDBsum" id="1QF2"/>
<dbReference type="PDBsum" id="1THL"/>
<dbReference type="PDBsum" id="1TLI"/>
<dbReference type="PDBsum" id="1TLP"/>
<dbReference type="PDBsum" id="1TLX"/>
<dbReference type="PDBsum" id="1TMN"/>
<dbReference type="PDBsum" id="1TRL"/>
<dbReference type="PDBsum" id="1Y3G"/>
<dbReference type="PDBsum" id="1Z9G"/>
<dbReference type="PDBsum" id="1ZDP"/>
<dbReference type="PDBsum" id="2A7G"/>
<dbReference type="PDBsum" id="2G4Z"/>
<dbReference type="PDBsum" id="2TLI"/>
<dbReference type="PDBsum" id="2TLX"/>
<dbReference type="PDBsum" id="2TMN"/>
<dbReference type="PDBsum" id="2WHZ"/>
<dbReference type="PDBsum" id="2WI0"/>
<dbReference type="PDBsum" id="3DNZ"/>
<dbReference type="PDBsum" id="3DO0"/>
<dbReference type="PDBsum" id="3DO1"/>
<dbReference type="PDBsum" id="3DO2"/>
<dbReference type="PDBsum" id="3EIM"/>
<dbReference type="PDBsum" id="3F28"/>
<dbReference type="PDBsum" id="3F2P"/>
<dbReference type="PDBsum" id="3FB0"/>
<dbReference type="PDBsum" id="3FBO"/>
<dbReference type="PDBsum" id="3FCQ"/>
<dbReference type="PDBsum" id="3FGD"/>
<dbReference type="PDBsum" id="3FLF"/>
<dbReference type="PDBsum" id="3FOR"/>
<dbReference type="PDBsum" id="3FV4"/>
<dbReference type="PDBsum" id="3FVP"/>
<dbReference type="PDBsum" id="3FXP"/>
<dbReference type="PDBsum" id="3FXS"/>
<dbReference type="PDBsum" id="3LS7"/>
<dbReference type="PDBsum" id="3MS3"/>
<dbReference type="PDBsum" id="3MSA"/>
<dbReference type="PDBsum" id="3MSF"/>
<dbReference type="PDBsum" id="3MSN"/>
<dbReference type="PDBsum" id="3N21"/>
<dbReference type="PDBsum" id="3NN7"/>
<dbReference type="PDBsum" id="3P7P"/>
<dbReference type="PDBsum" id="3P7Q"/>
<dbReference type="PDBsum" id="3P7R"/>
<dbReference type="PDBsum" id="3P7S"/>
<dbReference type="PDBsum" id="3P7T"/>
<dbReference type="PDBsum" id="3P7U"/>
<dbReference type="PDBsum" id="3P7V"/>
<dbReference type="PDBsum" id="3P7W"/>
<dbReference type="PDBsum" id="3QGO"/>
<dbReference type="PDBsum" id="3QH1"/>
<dbReference type="PDBsum" id="3QH5"/>
<dbReference type="PDBsum" id="3SSB"/>
<dbReference type="PDBsum" id="3T2H"/>
<dbReference type="PDBsum" id="3T2I"/>
<dbReference type="PDBsum" id="3T2J"/>
<dbReference type="PDBsum" id="3T73"/>
<dbReference type="PDBsum" id="3T74"/>
<dbReference type="PDBsum" id="3T87"/>
<dbReference type="PDBsum" id="3T8C"/>
<dbReference type="PDBsum" id="3T8D"/>
<dbReference type="PDBsum" id="3T8F"/>
<dbReference type="PDBsum" id="3T8G"/>
<dbReference type="PDBsum" id="3T8H"/>
<dbReference type="PDBsum" id="3TLI"/>
<dbReference type="PDBsum" id="3TMN"/>
<dbReference type="PDBsum" id="3ZI6"/>
<dbReference type="PDBsum" id="4D91"/>
<dbReference type="PDBsum" id="4D9W"/>
<dbReference type="PDBsum" id="4H57"/>
<dbReference type="PDBsum" id="4MTW"/>
<dbReference type="PDBsum" id="4MWP"/>
<dbReference type="PDBsum" id="4MXJ"/>
<dbReference type="PDBsum" id="4MZN"/>
<dbReference type="PDBsum" id="4N4E"/>
<dbReference type="PDBsum" id="4N5P"/>
<dbReference type="PDBsum" id="4N66"/>
<dbReference type="PDBsum" id="4OI5"/>
<dbReference type="PDBsum" id="4OW3"/>
<dbReference type="PDBsum" id="4TLI"/>
<dbReference type="PDBsum" id="4TLN"/>
<dbReference type="PDBsum" id="4TMN"/>
<dbReference type="PDBsum" id="4TNL"/>
<dbReference type="PDBsum" id="5A3Y"/>
<dbReference type="PDBsum" id="5DPE"/>
<dbReference type="PDBsum" id="5DPF"/>
<dbReference type="PDBsum" id="5FSJ"/>
<dbReference type="PDBsum" id="5FSP"/>
<dbReference type="PDBsum" id="5FSS"/>
<dbReference type="PDBsum" id="5FXN"/>
<dbReference type="PDBsum" id="5JS3"/>
<dbReference type="PDBsum" id="5JSS"/>
<dbReference type="PDBsum" id="5JT9"/>
<dbReference type="PDBsum" id="5JVI"/>
<dbReference type="PDBsum" id="5JXN"/>
<dbReference type="PDBsum" id="5K7T"/>
<dbReference type="PDBsum" id="5L3U"/>
<dbReference type="PDBsum" id="5L41"/>
<dbReference type="PDBsum" id="5L8P"/>
<dbReference type="PDBsum" id="5LIF"/>
<dbReference type="PDBsum" id="5LVD"/>
<dbReference type="PDBsum" id="5LWD"/>
<dbReference type="PDBsum" id="5M5F"/>
<dbReference type="PDBsum" id="5M69"/>
<dbReference type="PDBsum" id="5M9W"/>
<dbReference type="PDBsum" id="5MA7"/>
<dbReference type="PDBsum" id="5MNR"/>
<dbReference type="PDBsum" id="5N2T"/>
<dbReference type="PDBsum" id="5N2X"/>
<dbReference type="PDBsum" id="5N2Z"/>
<dbReference type="PDBsum" id="5N31"/>
<dbReference type="PDBsum" id="5N34"/>
<dbReference type="PDBsum" id="5N3V"/>
<dbReference type="PDBsum" id="5N3Y"/>
<dbReference type="PDBsum" id="5O8N"/>
<dbReference type="PDBsum" id="5ONR"/>
<dbReference type="PDBsum" id="5T9I"/>
<dbReference type="PDBsum" id="5T9K"/>
<dbReference type="PDBsum" id="5T9Q"/>
<dbReference type="PDBsum" id="5TAC"/>
<dbReference type="PDBsum" id="5TAD"/>
<dbReference type="PDBsum" id="5TAE"/>
<dbReference type="PDBsum" id="5TAI"/>
<dbReference type="PDBsum" id="5TAJ"/>
<dbReference type="PDBsum" id="5TAK"/>
<dbReference type="PDBsum" id="5TLI"/>
<dbReference type="PDBsum" id="5TLN"/>
<dbReference type="PDBsum" id="5TMN"/>
<dbReference type="PDBsum" id="5UN3"/>
<dbReference type="PDBsum" id="5UU7"/>
<dbReference type="PDBsum" id="5UU8"/>
<dbReference type="PDBsum" id="5UU9"/>
<dbReference type="PDBsum" id="5UUA"/>
<dbReference type="PDBsum" id="5UUB"/>
<dbReference type="PDBsum" id="5UUC"/>
<dbReference type="PDBsum" id="5UUD"/>
<dbReference type="PDBsum" id="5UUE"/>
<dbReference type="PDBsum" id="6D5N"/>
<dbReference type="PDBsum" id="6D5O"/>
<dbReference type="PDBsum" id="6D5P"/>
<dbReference type="PDBsum" id="6D5Q"/>
<dbReference type="PDBsum" id="6D5R"/>
<dbReference type="PDBsum" id="6D5S"/>
<dbReference type="PDBsum" id="6D5T"/>
<dbReference type="PDBsum" id="6D5U"/>
<dbReference type="PDBsum" id="6FJ2"/>
<dbReference type="PDBsum" id="6IG7"/>
<dbReference type="PDBsum" id="6LZN"/>
<dbReference type="PDBsum" id="6LZO"/>
<dbReference type="PDBsum" id="6N4W"/>
<dbReference type="PDBsum" id="6N4Z"/>
<dbReference type="PDBsum" id="6QAR"/>
<dbReference type="PDBsum" id="6QF2"/>
<dbReference type="PDBsum" id="6QF3"/>
<dbReference type="PDBsum" id="6SB9"/>
<dbReference type="PDBsum" id="6SBK"/>
<dbReference type="PDBsum" id="6SC0"/>
<dbReference type="PDBsum" id="6SC1"/>
<dbReference type="PDBsum" id="6SC3"/>
<dbReference type="PDBsum" id="6SCK"/>
<dbReference type="PDBsum" id="6SCU"/>
<dbReference type="PDBsum" id="6SEL"/>
<dbReference type="PDBsum" id="6TLI"/>
<dbReference type="PDBsum" id="6TMN"/>
<dbReference type="PDBsum" id="6ZHJ"/>
<dbReference type="PDBsum" id="7AKN"/>
<dbReference type="PDBsum" id="7TLI"/>
<dbReference type="PDBsum" id="7TLN"/>
<dbReference type="PDBsum" id="8TLI"/>
<dbReference type="PDBsum" id="8TLN"/>
<dbReference type="PDBsum" id="8ZM4"/>
<dbReference type="PDBsum" id="8ZM5"/>
<dbReference type="PDBsum" id="8ZM6"/>
<dbReference type="PDBsum" id="9F56"/>
<dbReference type="BMRB" id="P00800"/>
<dbReference type="EMDB" id="EMD-8222"/>
<dbReference type="SMR" id="P00800"/>
<dbReference type="BindingDB" id="P00800"/>
<dbReference type="ChEMBL" id="CHEMBL3392"/>
<dbReference type="DrugBank" id="DB07673">
    <property type="generic name" value="(2S)-2-Methyl-3-phenylpropanoic acid"/>
</dbReference>
<dbReference type="DrugBank" id="DB07487">
    <property type="generic name" value="(6-METHYL-3,4-DIHYDRO-2H-CHROMEN-2-YL)METHYLPHOSPHINATE"/>
</dbReference>
<dbReference type="DrugBank" id="DB07103">
    <property type="generic name" value="2-(4-METHYLPHENOXY)ETHYLPHOSPHINATE"/>
</dbReference>
<dbReference type="DrugBank" id="DB07989">
    <property type="generic name" value="2-(ACETYL-HYDROXY-AMINO)-4-METHYL-PENTANOIC ACID METHYL ESTER"/>
</dbReference>
<dbReference type="DrugBank" id="DB01935">
    <property type="generic name" value="3-{[(1r)-1-Benzyl-2-Sulfanylethyl]Amino}-3-Oxopropanoic Acid"/>
</dbReference>
<dbReference type="DrugBank" id="DB02597">
    <property type="generic name" value="[2(R,S)-2-Sulfanylheptanoyl]-Phe-Ala"/>
</dbReference>
<dbReference type="DrugBank" id="DB07434">
    <property type="generic name" value="HONH-BENZYLMALONYL-L-ALANYLGLYCINE-P-NITROANILIDE"/>
</dbReference>
<dbReference type="DrugBank" id="DB07506">
    <property type="generic name" value="L-BENZYLSUCCINIC ACID"/>
</dbReference>
<dbReference type="DrugBank" id="DB03255">
    <property type="generic name" value="Phenol"/>
</dbReference>
<dbReference type="DrugBank" id="DB02669">
    <property type="generic name" value="RB106"/>
</dbReference>
<dbReference type="DrugCentral" id="P00800"/>
<dbReference type="MEROPS" id="M04.001"/>
<dbReference type="KEGG" id="ag:CAA54291"/>
<dbReference type="BRENDA" id="3.4.24.27">
    <property type="organism ID" value="708"/>
</dbReference>
<dbReference type="SABIO-RK" id="P00800"/>
<dbReference type="EvolutionaryTrace" id="P00800"/>
<dbReference type="GO" id="GO:0005576">
    <property type="term" value="C:extracellular region"/>
    <property type="evidence" value="ECO:0007669"/>
    <property type="project" value="UniProtKB-SubCell"/>
</dbReference>
<dbReference type="GO" id="GO:0046872">
    <property type="term" value="F:metal ion binding"/>
    <property type="evidence" value="ECO:0007669"/>
    <property type="project" value="UniProtKB-KW"/>
</dbReference>
<dbReference type="GO" id="GO:0004222">
    <property type="term" value="F:metalloendopeptidase activity"/>
    <property type="evidence" value="ECO:0007669"/>
    <property type="project" value="InterPro"/>
</dbReference>
<dbReference type="GO" id="GO:0006508">
    <property type="term" value="P:proteolysis"/>
    <property type="evidence" value="ECO:0007669"/>
    <property type="project" value="UniProtKB-KW"/>
</dbReference>
<dbReference type="CDD" id="cd09597">
    <property type="entry name" value="M4_TLP"/>
    <property type="match status" value="1"/>
</dbReference>
<dbReference type="DisProt" id="DP02501"/>
<dbReference type="FunFam" id="1.10.390.10:FF:000012">
    <property type="entry name" value="Thermolysin"/>
    <property type="match status" value="1"/>
</dbReference>
<dbReference type="Gene3D" id="3.10.170.10">
    <property type="match status" value="1"/>
</dbReference>
<dbReference type="Gene3D" id="3.10.450.40">
    <property type="match status" value="1"/>
</dbReference>
<dbReference type="Gene3D" id="3.10.450.490">
    <property type="match status" value="1"/>
</dbReference>
<dbReference type="Gene3D" id="1.10.390.10">
    <property type="entry name" value="Neutral Protease Domain 2"/>
    <property type="match status" value="1"/>
</dbReference>
<dbReference type="InterPro" id="IPR011096">
    <property type="entry name" value="FTP_domain"/>
</dbReference>
<dbReference type="InterPro" id="IPR025711">
    <property type="entry name" value="PepSY"/>
</dbReference>
<dbReference type="InterPro" id="IPR023612">
    <property type="entry name" value="Peptidase_M4"/>
</dbReference>
<dbReference type="InterPro" id="IPR027268">
    <property type="entry name" value="Peptidase_M4/M1_CTD_sf"/>
</dbReference>
<dbReference type="InterPro" id="IPR001570">
    <property type="entry name" value="Peptidase_M4_C_domain"/>
</dbReference>
<dbReference type="InterPro" id="IPR013856">
    <property type="entry name" value="Peptidase_M4_domain"/>
</dbReference>
<dbReference type="InterPro" id="IPR050728">
    <property type="entry name" value="Zinc_Metalloprotease_M4"/>
</dbReference>
<dbReference type="PANTHER" id="PTHR33794">
    <property type="entry name" value="BACILLOLYSIN"/>
    <property type="match status" value="1"/>
</dbReference>
<dbReference type="PANTHER" id="PTHR33794:SF3">
    <property type="entry name" value="NEUTRAL PROTEASE B"/>
    <property type="match status" value="1"/>
</dbReference>
<dbReference type="Pfam" id="PF07504">
    <property type="entry name" value="FTP"/>
    <property type="match status" value="1"/>
</dbReference>
<dbReference type="Pfam" id="PF03413">
    <property type="entry name" value="PepSY"/>
    <property type="match status" value="1"/>
</dbReference>
<dbReference type="Pfam" id="PF01447">
    <property type="entry name" value="Peptidase_M4"/>
    <property type="match status" value="1"/>
</dbReference>
<dbReference type="Pfam" id="PF02868">
    <property type="entry name" value="Peptidase_M4_C"/>
    <property type="match status" value="1"/>
</dbReference>
<dbReference type="PRINTS" id="PR00730">
    <property type="entry name" value="THERMOLYSIN"/>
</dbReference>
<dbReference type="SUPFAM" id="SSF55486">
    <property type="entry name" value="Metalloproteases ('zincins'), catalytic domain"/>
    <property type="match status" value="1"/>
</dbReference>
<dbReference type="PROSITE" id="PS00142">
    <property type="entry name" value="ZINC_PROTEASE"/>
    <property type="match status" value="1"/>
</dbReference>
<organism>
    <name type="scientific">Bacillus thermoproteolyticus</name>
    <dbReference type="NCBI Taxonomy" id="1427"/>
    <lineage>
        <taxon>Bacteria</taxon>
        <taxon>Bacillati</taxon>
        <taxon>Bacillota</taxon>
        <taxon>Bacilli</taxon>
        <taxon>Bacillales</taxon>
        <taxon>Bacillaceae</taxon>
        <taxon>Bacillus</taxon>
    </lineage>
</organism>
<comment type="function">
    <text>Extracellular zinc metalloprotease.</text>
</comment>
<comment type="catalytic activity">
    <reaction>
        <text>Preferential cleavage: Xaa-|-Leu &gt; Xaa-|-Phe.</text>
        <dbReference type="EC" id="3.4.24.27"/>
    </reaction>
</comment>
<comment type="cofactor">
    <cofactor>
        <name>Ca(2+)</name>
        <dbReference type="ChEBI" id="CHEBI:29108"/>
    </cofactor>
    <text>Binds 4 Ca(2+) ions per subunit.</text>
</comment>
<comment type="cofactor">
    <cofactor>
        <name>Zn(2+)</name>
        <dbReference type="ChEBI" id="CHEBI:29105"/>
    </cofactor>
    <text>Binds 1 zinc ion per subunit.</text>
</comment>
<comment type="biophysicochemical properties">
    <temperatureDependence>
        <text>Thermostable.</text>
    </temperatureDependence>
</comment>
<comment type="subcellular location">
    <subcellularLocation>
        <location>Secreted</location>
    </subcellularLocation>
</comment>
<comment type="similarity">
    <text evidence="6">Belongs to the peptidase M4 family.</text>
</comment>
<gene>
    <name type="primary">npr</name>
</gene>
<reference key="1">
    <citation type="journal article" date="1994" name="Biochem. J.">
        <title>Cloning and expression in Bacillus subtilis of the npr gene from Bacillus thermoproteolyticus Rokko coding for the thermostable metalloprotease thermolysin.</title>
        <authorList>
            <person name="O'Donohue M.J."/>
            <person name="Roques B.P."/>
            <person name="Beaumont A."/>
        </authorList>
    </citation>
    <scope>NUCLEOTIDE SEQUENCE [GENOMIC DNA]</scope>
    <source>
        <strain>Rokko</strain>
    </source>
</reference>
<reference key="2">
    <citation type="journal article" date="1972" name="Nature New Biol.">
        <title>Amino-acid sequence of thermolysin.</title>
        <authorList>
            <person name="Titani K."/>
            <person name="Hermodson M.A."/>
            <person name="Ericsson L.H."/>
            <person name="Walsh K.A."/>
            <person name="Neurath H."/>
        </authorList>
    </citation>
    <scope>PROTEIN SEQUENCE OF 233-548</scope>
</reference>
<reference key="3">
    <citation type="journal article" date="1972" name="Biochemistry">
        <title>Amino acid sequence of thermolysin. Isolation and characterization of the fragments obtained by cleavage with cyanogen bromide.</title>
        <authorList>
            <person name="Titani K."/>
            <person name="Hermodson M.A."/>
            <person name="Ericsson L.H."/>
            <person name="Walsh K.A."/>
            <person name="Neurath H."/>
        </authorList>
    </citation>
    <scope>PROTEIN SEQUENCE OF 233-268; 352-400 AND 438-477</scope>
</reference>
<reference key="4">
    <citation type="journal article" date="1974" name="Biochemistry">
        <title>Evidence of an essential histidine residue in thermolysin.</title>
        <authorList>
            <person name="Burstein Y."/>
            <person name="Walsh K.A."/>
            <person name="Neurath H."/>
        </authorList>
    </citation>
    <scope>ACTIVE SITE</scope>
</reference>
<reference key="5">
    <citation type="journal article" date="1982" name="J. Mol. Biol.">
        <title>Structure of thermolysin refined at 1.6-A resolution.</title>
        <authorList>
            <person name="Holmes M.A."/>
            <person name="Matthews B.W."/>
        </authorList>
    </citation>
    <scope>X-RAY CRYSTALLOGRAPHY (1.6 ANGSTROMS)</scope>
</reference>
<reference key="6">
    <citation type="journal article" date="1974" name="J. Biol. Chem.">
        <title>The conformation of thermolysin.</title>
        <authorList>
            <person name="Matthews B.W."/>
            <person name="Weaver L.H."/>
            <person name="Kester W.R."/>
        </authorList>
    </citation>
    <scope>X-RAY CRYSTALLOGRAPHY (2.3 ANGSTROMS)</scope>
</reference>
<reference key="7">
    <citation type="journal article" date="1994" name="Biochemistry">
        <title>NMR solution structure of the C-terminal fragment 255-316 of thermolysin: a dimer formed by subunits having the native structure.</title>
        <authorList>
            <person name="Rico M."/>
            <person name="Jimenez M.A."/>
            <person name="Gonzalez C."/>
            <person name="de Filippis V."/>
            <person name="Fontana A."/>
        </authorList>
    </citation>
    <scope>STRUCTURE BY NMR OF 487-548</scope>
</reference>
<reference key="8">
    <citation type="journal article" date="1997" name="Biochemistry">
        <title>NMR solution structure of the 205-316 C-terminal fragment of thermolysin. An example of dimerization coupled to partial unfolding.</title>
        <authorList>
            <person name="Conejero-Lara F."/>
            <person name="Gonzalez C."/>
            <person name="Jimenez M.A."/>
            <person name="Padmanabhan S."/>
            <person name="Mateo P.L."/>
            <person name="Rico M."/>
        </authorList>
    </citation>
    <scope>STRUCTURE BY NMR OF 437-548</scope>
</reference>